<reference key="1">
    <citation type="journal article" date="2003" name="J. Bacteriol.">
        <title>Comparative analyses of the complete genome sequences of Pierce's disease and citrus variegated chlorosis strains of Xylella fastidiosa.</title>
        <authorList>
            <person name="Van Sluys M.A."/>
            <person name="de Oliveira M.C."/>
            <person name="Monteiro-Vitorello C.B."/>
            <person name="Miyaki C.Y."/>
            <person name="Furlan L.R."/>
            <person name="Camargo L.E.A."/>
            <person name="da Silva A.C.R."/>
            <person name="Moon D.H."/>
            <person name="Takita M.A."/>
            <person name="Lemos E.G.M."/>
            <person name="Machado M.A."/>
            <person name="Ferro M.I.T."/>
            <person name="da Silva F.R."/>
            <person name="Goldman M.H.S."/>
            <person name="Goldman G.H."/>
            <person name="Lemos M.V.F."/>
            <person name="El-Dorry H."/>
            <person name="Tsai S.M."/>
            <person name="Carrer H."/>
            <person name="Carraro D.M."/>
            <person name="de Oliveira R.C."/>
            <person name="Nunes L.R."/>
            <person name="Siqueira W.J."/>
            <person name="Coutinho L.L."/>
            <person name="Kimura E.T."/>
            <person name="Ferro E.S."/>
            <person name="Harakava R."/>
            <person name="Kuramae E.E."/>
            <person name="Marino C.L."/>
            <person name="Giglioti E."/>
            <person name="Abreu I.L."/>
            <person name="Alves L.M.C."/>
            <person name="do Amaral A.M."/>
            <person name="Baia G.S."/>
            <person name="Blanco S.R."/>
            <person name="Brito M.S."/>
            <person name="Cannavan F.S."/>
            <person name="Celestino A.V."/>
            <person name="da Cunha A.F."/>
            <person name="Fenille R.C."/>
            <person name="Ferro J.A."/>
            <person name="Formighieri E.F."/>
            <person name="Kishi L.T."/>
            <person name="Leoni S.G."/>
            <person name="Oliveira A.R."/>
            <person name="Rosa V.E. Jr."/>
            <person name="Sassaki F.T."/>
            <person name="Sena J.A.D."/>
            <person name="de Souza A.A."/>
            <person name="Truffi D."/>
            <person name="Tsukumo F."/>
            <person name="Yanai G.M."/>
            <person name="Zaros L.G."/>
            <person name="Civerolo E.L."/>
            <person name="Simpson A.J.G."/>
            <person name="Almeida N.F. Jr."/>
            <person name="Setubal J.C."/>
            <person name="Kitajima J.P."/>
        </authorList>
    </citation>
    <scope>NUCLEOTIDE SEQUENCE [LARGE SCALE GENOMIC DNA]</scope>
    <source>
        <strain>Temecula1 / ATCC 700964</strain>
    </source>
</reference>
<evidence type="ECO:0000255" key="1">
    <source>
        <dbReference type="HAMAP-Rule" id="MF_00171"/>
    </source>
</evidence>
<evidence type="ECO:0000305" key="2"/>
<dbReference type="EC" id="5.4.99.12" evidence="1"/>
<dbReference type="EMBL" id="AE009442">
    <property type="protein sequence ID" value="AAO28482.1"/>
    <property type="status" value="ALT_INIT"/>
    <property type="molecule type" value="Genomic_DNA"/>
</dbReference>
<dbReference type="SMR" id="Q87DS1"/>
<dbReference type="KEGG" id="xft:PD_0610"/>
<dbReference type="HOGENOM" id="CLU_014673_0_2_6"/>
<dbReference type="Proteomes" id="UP000002516">
    <property type="component" value="Chromosome"/>
</dbReference>
<dbReference type="GO" id="GO:0003723">
    <property type="term" value="F:RNA binding"/>
    <property type="evidence" value="ECO:0007669"/>
    <property type="project" value="InterPro"/>
</dbReference>
<dbReference type="GO" id="GO:0160147">
    <property type="term" value="F:tRNA pseudouridine(38-40) synthase activity"/>
    <property type="evidence" value="ECO:0007669"/>
    <property type="project" value="UniProtKB-EC"/>
</dbReference>
<dbReference type="GO" id="GO:0031119">
    <property type="term" value="P:tRNA pseudouridine synthesis"/>
    <property type="evidence" value="ECO:0007669"/>
    <property type="project" value="UniProtKB-UniRule"/>
</dbReference>
<dbReference type="CDD" id="cd02570">
    <property type="entry name" value="PseudoU_synth_EcTruA"/>
    <property type="match status" value="1"/>
</dbReference>
<dbReference type="FunFam" id="3.30.70.580:FF:000001">
    <property type="entry name" value="tRNA pseudouridine synthase A"/>
    <property type="match status" value="1"/>
</dbReference>
<dbReference type="Gene3D" id="3.30.70.660">
    <property type="entry name" value="Pseudouridine synthase I, catalytic domain, C-terminal subdomain"/>
    <property type="match status" value="1"/>
</dbReference>
<dbReference type="Gene3D" id="3.30.70.580">
    <property type="entry name" value="Pseudouridine synthase I, catalytic domain, N-terminal subdomain"/>
    <property type="match status" value="1"/>
</dbReference>
<dbReference type="HAMAP" id="MF_00171">
    <property type="entry name" value="TruA"/>
    <property type="match status" value="1"/>
</dbReference>
<dbReference type="InterPro" id="IPR020103">
    <property type="entry name" value="PsdUridine_synth_cat_dom_sf"/>
</dbReference>
<dbReference type="InterPro" id="IPR001406">
    <property type="entry name" value="PsdUridine_synth_TruA"/>
</dbReference>
<dbReference type="InterPro" id="IPR020097">
    <property type="entry name" value="PsdUridine_synth_TruA_a/b_dom"/>
</dbReference>
<dbReference type="InterPro" id="IPR020095">
    <property type="entry name" value="PsdUridine_synth_TruA_C"/>
</dbReference>
<dbReference type="InterPro" id="IPR020094">
    <property type="entry name" value="TruA/RsuA/RluB/E/F_N"/>
</dbReference>
<dbReference type="NCBIfam" id="TIGR00071">
    <property type="entry name" value="hisT_truA"/>
    <property type="match status" value="1"/>
</dbReference>
<dbReference type="PANTHER" id="PTHR11142">
    <property type="entry name" value="PSEUDOURIDYLATE SYNTHASE"/>
    <property type="match status" value="1"/>
</dbReference>
<dbReference type="PANTHER" id="PTHR11142:SF0">
    <property type="entry name" value="TRNA PSEUDOURIDINE SYNTHASE-LIKE 1"/>
    <property type="match status" value="1"/>
</dbReference>
<dbReference type="Pfam" id="PF01416">
    <property type="entry name" value="PseudoU_synth_1"/>
    <property type="match status" value="2"/>
</dbReference>
<dbReference type="PIRSF" id="PIRSF001430">
    <property type="entry name" value="tRNA_psdUrid_synth"/>
    <property type="match status" value="1"/>
</dbReference>
<dbReference type="SUPFAM" id="SSF55120">
    <property type="entry name" value="Pseudouridine synthase"/>
    <property type="match status" value="1"/>
</dbReference>
<feature type="chain" id="PRO_0000057495" description="tRNA pseudouridine synthase A">
    <location>
        <begin position="1"/>
        <end position="257"/>
    </location>
</feature>
<feature type="active site" description="Nucleophile" evidence="1">
    <location>
        <position position="53"/>
    </location>
</feature>
<feature type="binding site" evidence="1">
    <location>
        <position position="111"/>
    </location>
    <ligand>
        <name>substrate</name>
    </ligand>
</feature>
<keyword id="KW-0413">Isomerase</keyword>
<keyword id="KW-1185">Reference proteome</keyword>
<keyword id="KW-0819">tRNA processing</keyword>
<name>TRUA_XYLFT</name>
<protein>
    <recommendedName>
        <fullName evidence="1">tRNA pseudouridine synthase A</fullName>
        <ecNumber evidence="1">5.4.99.12</ecNumber>
    </recommendedName>
    <alternativeName>
        <fullName evidence="1">tRNA pseudouridine(38-40) synthase</fullName>
    </alternativeName>
    <alternativeName>
        <fullName evidence="1">tRNA pseudouridylate synthase I</fullName>
    </alternativeName>
    <alternativeName>
        <fullName evidence="1">tRNA-uridine isomerase I</fullName>
    </alternativeName>
</protein>
<proteinExistence type="inferred from homology"/>
<accession>Q87DS1</accession>
<organism>
    <name type="scientific">Xylella fastidiosa (strain Temecula1 / ATCC 700964)</name>
    <dbReference type="NCBI Taxonomy" id="183190"/>
    <lineage>
        <taxon>Bacteria</taxon>
        <taxon>Pseudomonadati</taxon>
        <taxon>Pseudomonadota</taxon>
        <taxon>Gammaproteobacteria</taxon>
        <taxon>Lysobacterales</taxon>
        <taxon>Lysobacteraceae</taxon>
        <taxon>Xylella</taxon>
    </lineage>
</organism>
<comment type="function">
    <text evidence="1">Formation of pseudouridine at positions 38, 39 and 40 in the anticodon stem and loop of transfer RNAs.</text>
</comment>
<comment type="catalytic activity">
    <reaction evidence="1">
        <text>uridine(38/39/40) in tRNA = pseudouridine(38/39/40) in tRNA</text>
        <dbReference type="Rhea" id="RHEA:22376"/>
        <dbReference type="Rhea" id="RHEA-COMP:10085"/>
        <dbReference type="Rhea" id="RHEA-COMP:10087"/>
        <dbReference type="ChEBI" id="CHEBI:65314"/>
        <dbReference type="ChEBI" id="CHEBI:65315"/>
        <dbReference type="EC" id="5.4.99.12"/>
    </reaction>
</comment>
<comment type="subunit">
    <text evidence="1">Homodimer.</text>
</comment>
<comment type="similarity">
    <text evidence="1">Belongs to the tRNA pseudouridine synthase TruA family.</text>
</comment>
<comment type="sequence caution" evidence="2">
    <conflict type="erroneous initiation">
        <sequence resource="EMBL-CDS" id="AAO28482"/>
    </conflict>
</comment>
<gene>
    <name evidence="1" type="primary">truA</name>
    <name type="ordered locus">PD_0610</name>
</gene>
<sequence>MMRYALGVEYDGSEFLGWQQLGEMGPSVQATLQQALASVADSSVRVVCAGRTDAGVHGQCQVVHFDSAVTRPPRAWILGTTTRLPSSVAVRWCVPTSEDFHARFSACARRYRYRLLNRQVRPALQHQFLSWERHPLDAQAMHVAAQMLLGENDFSAFRSAQCQALHARRELQAISVRRDAEVIEICVQANAFLHHMVRNIVGSLLMVGTGERPMEWIAELLAGRDRTMAGPTASARGLVFVGPLYPEKWHLPMEVSV</sequence>